<sequence>MGLMNAFDSQTEDSSPAIGRNLRSRPLARKKLSEMVEEELEQMIRRREFGEGEQLPSERELMAFFNVGRPSVREALAALKRKGLVQINNGERARVSRPSADTIIGEFSGMAKDFLSHPGGIAHFEQLRLFFESSLVRYAAEHATDEQIDLLAKALEINSQSLDNNAAFIRSDVDFHRVLAEIPGNPIFMAIHVALLDWLIAARPTVADQALHEHNNVSYQQHIAIVDAIRRHDPDEADRALQSHLNSVSATWHAFGQTTNKKK</sequence>
<gene>
    <name evidence="1" type="primary">nanR</name>
    <name type="ordered locus">SSON_3367</name>
</gene>
<name>NANR_SHISS</name>
<dbReference type="EMBL" id="CP000038">
    <property type="protein sequence ID" value="AAZ89940.1"/>
    <property type="molecule type" value="Genomic_DNA"/>
</dbReference>
<dbReference type="RefSeq" id="WP_000523837.1">
    <property type="nucleotide sequence ID" value="NC_007384.1"/>
</dbReference>
<dbReference type="SMR" id="Q3YX22"/>
<dbReference type="GeneID" id="93778760"/>
<dbReference type="KEGG" id="ssn:SSON_3367"/>
<dbReference type="HOGENOM" id="CLU_017584_9_1_6"/>
<dbReference type="Proteomes" id="UP000002529">
    <property type="component" value="Chromosome"/>
</dbReference>
<dbReference type="GO" id="GO:0003677">
    <property type="term" value="F:DNA binding"/>
    <property type="evidence" value="ECO:0007669"/>
    <property type="project" value="UniProtKB-KW"/>
</dbReference>
<dbReference type="GO" id="GO:0003700">
    <property type="term" value="F:DNA-binding transcription factor activity"/>
    <property type="evidence" value="ECO:0007669"/>
    <property type="project" value="UniProtKB-UniRule"/>
</dbReference>
<dbReference type="GO" id="GO:0045892">
    <property type="term" value="P:negative regulation of DNA-templated transcription"/>
    <property type="evidence" value="ECO:0007669"/>
    <property type="project" value="UniProtKB-UniRule"/>
</dbReference>
<dbReference type="CDD" id="cd07377">
    <property type="entry name" value="WHTH_GntR"/>
    <property type="match status" value="1"/>
</dbReference>
<dbReference type="FunFam" id="1.10.10.10:FF:000150">
    <property type="entry name" value="HTH-type transcriptional repressor NanR"/>
    <property type="match status" value="1"/>
</dbReference>
<dbReference type="FunFam" id="1.20.120.530:FF:000006">
    <property type="entry name" value="HTH-type transcriptional repressor NanR"/>
    <property type="match status" value="1"/>
</dbReference>
<dbReference type="Gene3D" id="1.20.120.530">
    <property type="entry name" value="GntR ligand-binding domain-like"/>
    <property type="match status" value="1"/>
</dbReference>
<dbReference type="Gene3D" id="1.10.10.10">
    <property type="entry name" value="Winged helix-like DNA-binding domain superfamily/Winged helix DNA-binding domain"/>
    <property type="match status" value="1"/>
</dbReference>
<dbReference type="HAMAP" id="MF_01236">
    <property type="entry name" value="HTH_NanR"/>
    <property type="match status" value="1"/>
</dbReference>
<dbReference type="InterPro" id="IPR011711">
    <property type="entry name" value="GntR_C"/>
</dbReference>
<dbReference type="InterPro" id="IPR008920">
    <property type="entry name" value="TF_FadR/GntR_C"/>
</dbReference>
<dbReference type="InterPro" id="IPR000524">
    <property type="entry name" value="Tscrpt_reg_HTH_GntR"/>
</dbReference>
<dbReference type="InterPro" id="IPR023730">
    <property type="entry name" value="Tscrpt_reg_NanR"/>
</dbReference>
<dbReference type="InterPro" id="IPR036388">
    <property type="entry name" value="WH-like_DNA-bd_sf"/>
</dbReference>
<dbReference type="InterPro" id="IPR036390">
    <property type="entry name" value="WH_DNA-bd_sf"/>
</dbReference>
<dbReference type="NCBIfam" id="NF003011">
    <property type="entry name" value="PRK03837.1"/>
    <property type="match status" value="1"/>
</dbReference>
<dbReference type="PANTHER" id="PTHR43537:SF53">
    <property type="entry name" value="HTH-TYPE TRANSCRIPTIONAL REPRESSOR NANR"/>
    <property type="match status" value="1"/>
</dbReference>
<dbReference type="PANTHER" id="PTHR43537">
    <property type="entry name" value="TRANSCRIPTIONAL REGULATOR, GNTR FAMILY"/>
    <property type="match status" value="1"/>
</dbReference>
<dbReference type="Pfam" id="PF07729">
    <property type="entry name" value="FCD"/>
    <property type="match status" value="1"/>
</dbReference>
<dbReference type="Pfam" id="PF00392">
    <property type="entry name" value="GntR"/>
    <property type="match status" value="1"/>
</dbReference>
<dbReference type="PRINTS" id="PR00035">
    <property type="entry name" value="HTHGNTR"/>
</dbReference>
<dbReference type="SMART" id="SM00895">
    <property type="entry name" value="FCD"/>
    <property type="match status" value="1"/>
</dbReference>
<dbReference type="SMART" id="SM00345">
    <property type="entry name" value="HTH_GNTR"/>
    <property type="match status" value="1"/>
</dbReference>
<dbReference type="SUPFAM" id="SSF48008">
    <property type="entry name" value="GntR ligand-binding domain-like"/>
    <property type="match status" value="1"/>
</dbReference>
<dbReference type="SUPFAM" id="SSF46785">
    <property type="entry name" value="Winged helix' DNA-binding domain"/>
    <property type="match status" value="1"/>
</dbReference>
<dbReference type="PROSITE" id="PS50949">
    <property type="entry name" value="HTH_GNTR"/>
    <property type="match status" value="1"/>
</dbReference>
<keyword id="KW-0238">DNA-binding</keyword>
<keyword id="KW-1185">Reference proteome</keyword>
<keyword id="KW-0678">Repressor</keyword>
<keyword id="KW-0804">Transcription</keyword>
<keyword id="KW-0805">Transcription regulation</keyword>
<protein>
    <recommendedName>
        <fullName evidence="1">HTH-type transcriptional repressor NanR</fullName>
    </recommendedName>
</protein>
<proteinExistence type="inferred from homology"/>
<evidence type="ECO:0000255" key="1">
    <source>
        <dbReference type="HAMAP-Rule" id="MF_01236"/>
    </source>
</evidence>
<evidence type="ECO:0000256" key="2">
    <source>
        <dbReference type="SAM" id="MobiDB-lite"/>
    </source>
</evidence>
<reference key="1">
    <citation type="journal article" date="2005" name="Nucleic Acids Res.">
        <title>Genome dynamics and diversity of Shigella species, the etiologic agents of bacillary dysentery.</title>
        <authorList>
            <person name="Yang F."/>
            <person name="Yang J."/>
            <person name="Zhang X."/>
            <person name="Chen L."/>
            <person name="Jiang Y."/>
            <person name="Yan Y."/>
            <person name="Tang X."/>
            <person name="Wang J."/>
            <person name="Xiong Z."/>
            <person name="Dong J."/>
            <person name="Xue Y."/>
            <person name="Zhu Y."/>
            <person name="Xu X."/>
            <person name="Sun L."/>
            <person name="Chen S."/>
            <person name="Nie H."/>
            <person name="Peng J."/>
            <person name="Xu J."/>
            <person name="Wang Y."/>
            <person name="Yuan Z."/>
            <person name="Wen Y."/>
            <person name="Yao Z."/>
            <person name="Shen Y."/>
            <person name="Qiang B."/>
            <person name="Hou Y."/>
            <person name="Yu J."/>
            <person name="Jin Q."/>
        </authorList>
    </citation>
    <scope>NUCLEOTIDE SEQUENCE [LARGE SCALE GENOMIC DNA]</scope>
    <source>
        <strain>Ss046</strain>
    </source>
</reference>
<feature type="chain" id="PRO_0000301529" description="HTH-type transcriptional repressor NanR">
    <location>
        <begin position="1"/>
        <end position="263"/>
    </location>
</feature>
<feature type="domain" description="HTH gntR-type" evidence="1">
    <location>
        <begin position="30"/>
        <end position="98"/>
    </location>
</feature>
<feature type="DNA-binding region" description="H-T-H motif" evidence="1">
    <location>
        <begin position="58"/>
        <end position="77"/>
    </location>
</feature>
<feature type="region of interest" description="Disordered" evidence="2">
    <location>
        <begin position="1"/>
        <end position="22"/>
    </location>
</feature>
<accession>Q3YX22</accession>
<comment type="function">
    <text evidence="1">Transcriptional repressor that controls expression of the genes required for the catabolism of sialic acids.</text>
</comment>
<comment type="similarity">
    <text evidence="1">Belongs to the NanR family.</text>
</comment>
<organism>
    <name type="scientific">Shigella sonnei (strain Ss046)</name>
    <dbReference type="NCBI Taxonomy" id="300269"/>
    <lineage>
        <taxon>Bacteria</taxon>
        <taxon>Pseudomonadati</taxon>
        <taxon>Pseudomonadota</taxon>
        <taxon>Gammaproteobacteria</taxon>
        <taxon>Enterobacterales</taxon>
        <taxon>Enterobacteriaceae</taxon>
        <taxon>Shigella</taxon>
    </lineage>
</organism>